<reference key="1">
    <citation type="journal article" date="1988" name="Sheng Wu Hua Hsueh Tsa Chih">
        <title>Determination of the nucleotide sequence and studies on the structure of hepatitis B virus (HBV) adr NC-1 surface antigen (HBsAg) gene.</title>
        <authorList>
            <person name="Qi Z.H."/>
            <person name="Yan J."/>
            <person name="Xiong W.J."/>
            <person name="Cai L.W."/>
        </authorList>
    </citation>
    <scope>NUCLEOTIDE SEQUENCE [GENOMIC DNA]</scope>
</reference>
<reference key="2">
    <citation type="journal article" date="1996" name="Intervirology">
        <title>Functions of the large hepatitis B virus surface protein in viral particle morphogenesis.</title>
        <authorList>
            <person name="Bruss V."/>
            <person name="Gerhardt E."/>
            <person name="Vieluf K."/>
            <person name="Wunderlich G."/>
        </authorList>
    </citation>
    <scope>REVIEW</scope>
</reference>
<reference key="3">
    <citation type="journal article" date="1998" name="Adv. Exp. Med. Biol.">
        <title>Role of glycan processing in hepatitis B virus envelope protein trafficking.</title>
        <authorList>
            <person name="Block T.M."/>
            <person name="Lu X."/>
            <person name="Mehta A."/>
            <person name="Park J."/>
            <person name="Blumberg B.S."/>
            <person name="Dwek R."/>
        </authorList>
    </citation>
    <scope>REVIEW</scope>
</reference>
<reference key="4">
    <citation type="journal article" date="2004" name="Virus Res.">
        <title>Envelopment of the hepatitis B virus nucleocapsid.</title>
        <authorList>
            <person name="Bruss V."/>
        </authorList>
    </citation>
    <scope>REVIEW</scope>
</reference>
<reference key="5">
    <citation type="journal article" date="2006" name="Cancer Sci.">
        <title>Hepatitis B virus pre-S mutants, endoplasmic reticulum stress and hepatocarcinogenesis.</title>
        <authorList>
            <person name="Wang H.C."/>
            <person name="Huang W."/>
            <person name="Lai M.D."/>
            <person name="Su I.J."/>
        </authorList>
    </citation>
    <scope>REVIEW</scope>
</reference>
<protein>
    <recommendedName>
        <fullName>Small envelope protein</fullName>
    </recommendedName>
    <alternativeName>
        <fullName>S glycoprotein</fullName>
    </alternativeName>
    <alternativeName>
        <fullName>S-HBsAg</fullName>
        <shortName>SHB</shortName>
    </alternativeName>
    <alternativeName>
        <fullName>Small S protein</fullName>
    </alternativeName>
    <alternativeName>
        <fullName>Small surface protein</fullName>
    </alternativeName>
</protein>
<feature type="chain" id="PRO_0000222356" description="Small envelope protein">
    <location>
        <begin position="1"/>
        <end position="226"/>
    </location>
</feature>
<feature type="topological domain" description="Virion surface" evidence="2">
    <location>
        <begin position="1"/>
        <end position="7"/>
    </location>
</feature>
<feature type="transmembrane region" description="Helical" evidence="2">
    <location>
        <begin position="8"/>
        <end position="28"/>
    </location>
</feature>
<feature type="topological domain" description="Intravirion" evidence="2">
    <location>
        <begin position="29"/>
        <end position="79"/>
    </location>
</feature>
<feature type="transmembrane region" description="Helical" evidence="2">
    <location>
        <begin position="80"/>
        <end position="100"/>
    </location>
</feature>
<feature type="topological domain" description="Virion surface" evidence="2">
    <location>
        <begin position="101"/>
        <end position="174"/>
    </location>
</feature>
<feature type="transmembrane region" description="Helical" evidence="2">
    <location>
        <begin position="175"/>
        <end position="195"/>
    </location>
</feature>
<feature type="topological domain" description="Intravirion" evidence="2">
    <location>
        <begin position="196"/>
        <end position="201"/>
    </location>
</feature>
<feature type="transmembrane region" description="Helical" evidence="2">
    <location>
        <begin position="202"/>
        <end position="224"/>
    </location>
</feature>
<feature type="topological domain" description="Virion surface" evidence="2">
    <location>
        <begin position="225"/>
        <end position="226"/>
    </location>
</feature>
<feature type="glycosylation site" description="N-linked (GlcNAc...) asparagine; by host" evidence="1">
    <location>
        <position position="146"/>
    </location>
</feature>
<evidence type="ECO:0000250" key="1"/>
<evidence type="ECO:0000255" key="2"/>
<evidence type="ECO:0000305" key="3"/>
<accession>P30019</accession>
<comment type="function">
    <text evidence="1 3">The large envelope protein exists in two topological conformations, one which is termed 'external' or Le-HBsAg and the other 'internal' or Li-HBsAg. In its external conformation the protein attaches the virus to cell receptors and thereby initiating infection. This interaction determines the species specificity and liver tropism. This attachment induces virion internalization predominantly through caveolin-mediated endocytosis. The large envelope protein also assumes fusion between virion membrane and endosomal membrane (Probable). In its internal conformation the protein plays a role in virion morphogenesis and mediates the contact with the nucleocapsid like a matrix protein (By similarity).</text>
</comment>
<comment type="function">
    <text evidence="1">The middle envelope protein plays an important role in the budding of the virion. It is involved in the induction of budding in a nucleocapsid independent way. In this process the majority of envelope proteins bud to form subviral lipoprotein particles of 22 nm of diameter that do not contain a nucleocapsid (By similarity).</text>
</comment>
<comment type="subcellular location">
    <subcellularLocation>
        <location evidence="1">Virion membrane</location>
    </subcellularLocation>
</comment>
<comment type="biotechnology">
    <text>Systematic vaccination of individuals at risk of exposure to the virus has been the main method of controlling the morbidity and mortality associated with hepatitis B. The first hepatitis B vaccine was manufactured by the purification and inactivation of HBsAg obtained from the plasma of chronic hepatitis B virus carriers. The vaccine is now produced by recombinant DNA techniques and expression of the S isoform in yeast cells. The pre-S region do not seem to induce strong enough antigenic response.</text>
</comment>
<comment type="similarity">
    <text evidence="3">Belongs to the orthohepadnavirus major surface antigen family.</text>
</comment>
<organism>
    <name type="scientific">Hepatitis B virus genotype C subtype adr (isolate China/NC-1/1988)</name>
    <name type="common">HBV-C</name>
    <dbReference type="NCBI Taxonomy" id="31513"/>
    <lineage>
        <taxon>Viruses</taxon>
        <taxon>Riboviria</taxon>
        <taxon>Pararnavirae</taxon>
        <taxon>Artverviricota</taxon>
        <taxon>Revtraviricetes</taxon>
        <taxon>Blubervirales</taxon>
        <taxon>Hepadnaviridae</taxon>
        <taxon>Orthohepadnavirus</taxon>
        <taxon>Hepatitis B virus</taxon>
    </lineage>
</organism>
<sequence>MENTASGFLGPLLVLQAGFFLLTRILTIPQSLDSWWTSLNFLGGAPTCPGQNSQSPTSNHSPTSCPPICPGYRWMCLRRFIIFLFILLLCLIFLLVLLDYHGMLPVCPLLPGTSTTSTGPCKTCTIPAQGTSMFPSCCCTKPSDGNCTCIPIPSSWAFARFLWEWASVRFSWLSLLVPFVQWFVGLSPTVWLSVIWMMWYWGPSLYNILSPFLPLLPIFFCLWVYI</sequence>
<keyword id="KW-1166">Caveolin-mediated endocytosis of virus by host</keyword>
<keyword id="KW-1170">Fusion of virus membrane with host endosomal membrane</keyword>
<keyword id="KW-1168">Fusion of virus membrane with host membrane</keyword>
<keyword id="KW-0325">Glycoprotein</keyword>
<keyword id="KW-0945">Host-virus interaction</keyword>
<keyword id="KW-0449">Lipoprotein</keyword>
<keyword id="KW-0472">Membrane</keyword>
<keyword id="KW-0519">Myristate</keyword>
<keyword id="KW-0812">Transmembrane</keyword>
<keyword id="KW-1133">Transmembrane helix</keyword>
<keyword id="KW-1161">Viral attachment to host cell</keyword>
<keyword id="KW-0261">Viral envelope protein</keyword>
<keyword id="KW-1162">Viral penetration into host cytoplasm</keyword>
<keyword id="KW-0946">Virion</keyword>
<keyword id="KW-1164">Virus endocytosis by host</keyword>
<keyword id="KW-1160">Virus entry into host cell</keyword>
<proteinExistence type="evidence at protein level"/>
<dbReference type="PIR" id="JC1002">
    <property type="entry name" value="SAVLN1"/>
</dbReference>
<dbReference type="SMR" id="P30019"/>
<dbReference type="GlyCosmos" id="P30019">
    <property type="glycosylation" value="1 site, No reported glycans"/>
</dbReference>
<dbReference type="GO" id="GO:0016020">
    <property type="term" value="C:membrane"/>
    <property type="evidence" value="ECO:0007669"/>
    <property type="project" value="UniProtKB-KW"/>
</dbReference>
<dbReference type="GO" id="GO:0019031">
    <property type="term" value="C:viral envelope"/>
    <property type="evidence" value="ECO:0007669"/>
    <property type="project" value="UniProtKB-KW"/>
</dbReference>
<dbReference type="GO" id="GO:0055036">
    <property type="term" value="C:virion membrane"/>
    <property type="evidence" value="ECO:0007669"/>
    <property type="project" value="UniProtKB-SubCell"/>
</dbReference>
<dbReference type="GO" id="GO:0075513">
    <property type="term" value="P:caveolin-mediated endocytosis of virus by host cell"/>
    <property type="evidence" value="ECO:0007669"/>
    <property type="project" value="UniProtKB-KW"/>
</dbReference>
<dbReference type="GO" id="GO:0039654">
    <property type="term" value="P:fusion of virus membrane with host endosome membrane"/>
    <property type="evidence" value="ECO:0007669"/>
    <property type="project" value="UniProtKB-KW"/>
</dbReference>
<dbReference type="GO" id="GO:0019062">
    <property type="term" value="P:virion attachment to host cell"/>
    <property type="evidence" value="ECO:0007669"/>
    <property type="project" value="UniProtKB-KW"/>
</dbReference>
<dbReference type="InterPro" id="IPR000349">
    <property type="entry name" value="HBV_HBSAG"/>
</dbReference>
<dbReference type="Pfam" id="PF00695">
    <property type="entry name" value="vMSA"/>
    <property type="match status" value="1"/>
</dbReference>
<name>HBSAG_HBVC6</name>
<gene>
    <name type="primary">S</name>
</gene>
<organismHost>
    <name type="scientific">Homo sapiens</name>
    <name type="common">Human</name>
    <dbReference type="NCBI Taxonomy" id="9606"/>
</organismHost>
<organismHost>
    <name type="scientific">Pan troglodytes</name>
    <name type="common">Chimpanzee</name>
    <dbReference type="NCBI Taxonomy" id="9598"/>
</organismHost>